<sequence>MLSLDYNNIFIYELLTERFSSENPSSIDQVVTDFDGVTFHISTPEEKTKILISLSMKCYPELVNYGTLDLLKQIYGAYVHEPEMGYNFSILIDLQQLPATDEEKEQLAMSISMLKRNVLAAPFHRAFTKQAELADLARKDPENAPMLDKQATSQELMAIHYRDEETIVLWPEHDRVTVVFSTKFREETDRIFGKVFLQEFVDARRRPAIQTAPQVLFSYRDPPLEIRDIQGIQKGDDFGFVTFVLFERHFTPQNREDCISHIQVFRNTLHFHIKASKAYMHQRMRKRVADFQKVLNRAKPDVELERKTATGRSFVRA</sequence>
<proteinExistence type="evidence at protein level"/>
<protein>
    <recommendedName>
        <fullName>Actin-related protein 2/3 complex subunit 2</fullName>
    </recommendedName>
    <alternativeName>
        <fullName>Arp2/3 complex 34 kDa subunit</fullName>
        <shortName>p34-ARC</shortName>
    </alternativeName>
</protein>
<gene>
    <name type="primary">arc2</name>
    <name type="synonym">arc34</name>
    <name type="ORF">SPAC6F6.10c</name>
</gene>
<comment type="function">
    <text evidence="1">Functions as actin-binding component of the Arp2/3 complex which is involved in regulation of actin polymerization and together with an activating nucleation-promoting factor (NPF) mediates the formation of branched actin networks. Seems to contact the mother actin filament (By similarity).</text>
</comment>
<comment type="subunit">
    <text evidence="2">Component of the Arp2/3 complex composed of arp2, act2, arc1/p41-ARC, arc2/p34-ARC, arc3/p21-ARC, arc4/p20-ARC and arc5/p16-ARC.</text>
</comment>
<comment type="subcellular location">
    <subcellularLocation>
        <location>Cytoplasm</location>
        <location>Cytoskeleton</location>
        <location>Actin patch</location>
    </subcellularLocation>
</comment>
<comment type="similarity">
    <text evidence="3">Belongs to the ARPC2 family.</text>
</comment>
<dbReference type="EMBL" id="CU329670">
    <property type="protein sequence ID" value="CAB11733.1"/>
    <property type="molecule type" value="Genomic_DNA"/>
</dbReference>
<dbReference type="PIR" id="T39044">
    <property type="entry name" value="T39044"/>
</dbReference>
<dbReference type="RefSeq" id="NP_593903.1">
    <property type="nucleotide sequence ID" value="NM_001019333.2"/>
</dbReference>
<dbReference type="PDB" id="3DWL">
    <property type="method" value="X-ray"/>
    <property type="resolution" value="3.78 A"/>
    <property type="chains" value="D/I=1-317"/>
</dbReference>
<dbReference type="PDB" id="6W17">
    <property type="method" value="EM"/>
    <property type="resolution" value="3.90 A"/>
    <property type="chains" value="D=1-317"/>
</dbReference>
<dbReference type="PDB" id="6W18">
    <property type="method" value="EM"/>
    <property type="resolution" value="4.20 A"/>
    <property type="chains" value="D=1-317"/>
</dbReference>
<dbReference type="PDB" id="8E9B">
    <property type="method" value="EM"/>
    <property type="resolution" value="3.50 A"/>
    <property type="chains" value="D=1-317"/>
</dbReference>
<dbReference type="PDB" id="8UXW">
    <property type="method" value="EM"/>
    <property type="resolution" value="2.70 A"/>
    <property type="chains" value="D=1-317"/>
</dbReference>
<dbReference type="PDB" id="8UXX">
    <property type="method" value="EM"/>
    <property type="resolution" value="3.20 A"/>
    <property type="chains" value="D=1-317"/>
</dbReference>
<dbReference type="PDBsum" id="3DWL"/>
<dbReference type="PDBsum" id="6W17"/>
<dbReference type="PDBsum" id="6W18"/>
<dbReference type="PDBsum" id="8E9B"/>
<dbReference type="PDBsum" id="8UXW"/>
<dbReference type="PDBsum" id="8UXX"/>
<dbReference type="EMDB" id="EMD-21502"/>
<dbReference type="EMDB" id="EMD-21503"/>
<dbReference type="EMDB" id="EMD-27962"/>
<dbReference type="EMDB" id="EMD-42787"/>
<dbReference type="EMDB" id="EMD-42788"/>
<dbReference type="SMR" id="O14241"/>
<dbReference type="BioGRID" id="278755">
    <property type="interactions" value="4"/>
</dbReference>
<dbReference type="ComplexPortal" id="CPX-2474">
    <property type="entry name" value="Actin-related protein 2/3 complex"/>
</dbReference>
<dbReference type="FunCoup" id="O14241">
    <property type="interactions" value="372"/>
</dbReference>
<dbReference type="IntAct" id="O14241">
    <property type="interactions" value="3"/>
</dbReference>
<dbReference type="STRING" id="284812.O14241"/>
<dbReference type="iPTMnet" id="O14241"/>
<dbReference type="PaxDb" id="4896-SPAC6F6.10c.1"/>
<dbReference type="EnsemblFungi" id="SPAC6F6.10c.1">
    <property type="protein sequence ID" value="SPAC6F6.10c.1:pep"/>
    <property type="gene ID" value="SPAC6F6.10c"/>
</dbReference>
<dbReference type="GeneID" id="2542287"/>
<dbReference type="KEGG" id="spo:2542287"/>
<dbReference type="PomBase" id="SPAC6F6.10c">
    <property type="gene designation" value="arc2"/>
</dbReference>
<dbReference type="VEuPathDB" id="FungiDB:SPAC6F6.10c"/>
<dbReference type="eggNOG" id="KOG2826">
    <property type="taxonomic scope" value="Eukaryota"/>
</dbReference>
<dbReference type="HOGENOM" id="CLU_059439_1_0_1"/>
<dbReference type="InParanoid" id="O14241"/>
<dbReference type="OMA" id="FRSYFHY"/>
<dbReference type="PhylomeDB" id="O14241"/>
<dbReference type="Reactome" id="R-SPO-2029482">
    <property type="pathway name" value="Regulation of actin dynamics for phagocytic cup formation"/>
</dbReference>
<dbReference type="Reactome" id="R-SPO-5663213">
    <property type="pathway name" value="RHO GTPases Activate WASPs and WAVEs"/>
</dbReference>
<dbReference type="Reactome" id="R-SPO-8856828">
    <property type="pathway name" value="Clathrin-mediated endocytosis"/>
</dbReference>
<dbReference type="EvolutionaryTrace" id="O14241"/>
<dbReference type="PRO" id="PR:O14241"/>
<dbReference type="Proteomes" id="UP000002485">
    <property type="component" value="Chromosome I"/>
</dbReference>
<dbReference type="GO" id="GO:0030479">
    <property type="term" value="C:actin cortical patch"/>
    <property type="evidence" value="ECO:0000305"/>
    <property type="project" value="PomBase"/>
</dbReference>
<dbReference type="GO" id="GO:0005885">
    <property type="term" value="C:Arp2/3 protein complex"/>
    <property type="evidence" value="ECO:0000314"/>
    <property type="project" value="PomBase"/>
</dbReference>
<dbReference type="GO" id="GO:0032153">
    <property type="term" value="C:cell division site"/>
    <property type="evidence" value="ECO:0007005"/>
    <property type="project" value="PomBase"/>
</dbReference>
<dbReference type="GO" id="GO:0051286">
    <property type="term" value="C:cell tip"/>
    <property type="evidence" value="ECO:0007005"/>
    <property type="project" value="PomBase"/>
</dbReference>
<dbReference type="GO" id="GO:0005829">
    <property type="term" value="C:cytosol"/>
    <property type="evidence" value="ECO:0007005"/>
    <property type="project" value="PomBase"/>
</dbReference>
<dbReference type="GO" id="GO:0005634">
    <property type="term" value="C:nucleus"/>
    <property type="evidence" value="ECO:0007005"/>
    <property type="project" value="PomBase"/>
</dbReference>
<dbReference type="GO" id="GO:0051015">
    <property type="term" value="F:actin filament binding"/>
    <property type="evidence" value="ECO:0000314"/>
    <property type="project" value="PomBase"/>
</dbReference>
<dbReference type="GO" id="GO:0005200">
    <property type="term" value="F:structural constituent of cytoskeleton"/>
    <property type="evidence" value="ECO:0000318"/>
    <property type="project" value="GO_Central"/>
</dbReference>
<dbReference type="GO" id="GO:0000147">
    <property type="term" value="P:actin cortical patch assembly"/>
    <property type="evidence" value="ECO:0000305"/>
    <property type="project" value="PomBase"/>
</dbReference>
<dbReference type="GO" id="GO:0090135">
    <property type="term" value="P:actin filament branching"/>
    <property type="evidence" value="ECO:0000269"/>
    <property type="project" value="PomBase"/>
</dbReference>
<dbReference type="GO" id="GO:0030041">
    <property type="term" value="P:actin filament polymerization"/>
    <property type="evidence" value="ECO:0007669"/>
    <property type="project" value="InterPro"/>
</dbReference>
<dbReference type="GO" id="GO:0034314">
    <property type="term" value="P:Arp2/3 complex-mediated actin nucleation"/>
    <property type="evidence" value="ECO:0000314"/>
    <property type="project" value="PomBase"/>
</dbReference>
<dbReference type="GO" id="GO:0006897">
    <property type="term" value="P:endocytosis"/>
    <property type="evidence" value="ECO:0000305"/>
    <property type="project" value="PomBase"/>
</dbReference>
<dbReference type="FunFam" id="3.30.1460.20:FF:000003">
    <property type="entry name" value="Arp2/3 complex 34 kDa subunit"/>
    <property type="match status" value="1"/>
</dbReference>
<dbReference type="FunFam" id="3.30.1460.20:FF:000005">
    <property type="entry name" value="Arp2/3 complex 34 kDa subunit"/>
    <property type="match status" value="1"/>
</dbReference>
<dbReference type="Gene3D" id="3.30.1460.20">
    <property type="match status" value="2"/>
</dbReference>
<dbReference type="InterPro" id="IPR007188">
    <property type="entry name" value="ARPC2"/>
</dbReference>
<dbReference type="InterPro" id="IPR034666">
    <property type="entry name" value="ARPC2/4"/>
</dbReference>
<dbReference type="PANTHER" id="PTHR12058:SF0">
    <property type="entry name" value="ACTIN-RELATED PROTEIN 2_3 COMPLEX SUBUNIT 2"/>
    <property type="match status" value="1"/>
</dbReference>
<dbReference type="PANTHER" id="PTHR12058">
    <property type="entry name" value="ARP2/3 COMPLEX 34 KDA SUBUNIT"/>
    <property type="match status" value="1"/>
</dbReference>
<dbReference type="Pfam" id="PF04045">
    <property type="entry name" value="P34-Arc"/>
    <property type="match status" value="1"/>
</dbReference>
<dbReference type="SUPFAM" id="SSF69645">
    <property type="entry name" value="Arp2/3 complex subunits"/>
    <property type="match status" value="2"/>
</dbReference>
<organism>
    <name type="scientific">Schizosaccharomyces pombe (strain 972 / ATCC 24843)</name>
    <name type="common">Fission yeast</name>
    <dbReference type="NCBI Taxonomy" id="284812"/>
    <lineage>
        <taxon>Eukaryota</taxon>
        <taxon>Fungi</taxon>
        <taxon>Dikarya</taxon>
        <taxon>Ascomycota</taxon>
        <taxon>Taphrinomycotina</taxon>
        <taxon>Schizosaccharomycetes</taxon>
        <taxon>Schizosaccharomycetales</taxon>
        <taxon>Schizosaccharomycetaceae</taxon>
        <taxon>Schizosaccharomyces</taxon>
    </lineage>
</organism>
<accession>O14241</accession>
<name>ARPC2_SCHPO</name>
<evidence type="ECO:0000250" key="1"/>
<evidence type="ECO:0000269" key="2">
    <source>
    </source>
</evidence>
<evidence type="ECO:0000305" key="3"/>
<evidence type="ECO:0007829" key="4">
    <source>
        <dbReference type="PDB" id="8UXW"/>
    </source>
</evidence>
<evidence type="ECO:0007829" key="5">
    <source>
        <dbReference type="PDB" id="8UXX"/>
    </source>
</evidence>
<reference key="1">
    <citation type="journal article" date="2002" name="Nature">
        <title>The genome sequence of Schizosaccharomyces pombe.</title>
        <authorList>
            <person name="Wood V."/>
            <person name="Gwilliam R."/>
            <person name="Rajandream M.A."/>
            <person name="Lyne M.H."/>
            <person name="Lyne R."/>
            <person name="Stewart A."/>
            <person name="Sgouros J.G."/>
            <person name="Peat N."/>
            <person name="Hayles J."/>
            <person name="Baker S.G."/>
            <person name="Basham D."/>
            <person name="Bowman S."/>
            <person name="Brooks K."/>
            <person name="Brown D."/>
            <person name="Brown S."/>
            <person name="Chillingworth T."/>
            <person name="Churcher C.M."/>
            <person name="Collins M."/>
            <person name="Connor R."/>
            <person name="Cronin A."/>
            <person name="Davis P."/>
            <person name="Feltwell T."/>
            <person name="Fraser A."/>
            <person name="Gentles S."/>
            <person name="Goble A."/>
            <person name="Hamlin N."/>
            <person name="Harris D.E."/>
            <person name="Hidalgo J."/>
            <person name="Hodgson G."/>
            <person name="Holroyd S."/>
            <person name="Hornsby T."/>
            <person name="Howarth S."/>
            <person name="Huckle E.J."/>
            <person name="Hunt S."/>
            <person name="Jagels K."/>
            <person name="James K.D."/>
            <person name="Jones L."/>
            <person name="Jones M."/>
            <person name="Leather S."/>
            <person name="McDonald S."/>
            <person name="McLean J."/>
            <person name="Mooney P."/>
            <person name="Moule S."/>
            <person name="Mungall K.L."/>
            <person name="Murphy L.D."/>
            <person name="Niblett D."/>
            <person name="Odell C."/>
            <person name="Oliver K."/>
            <person name="O'Neil S."/>
            <person name="Pearson D."/>
            <person name="Quail M.A."/>
            <person name="Rabbinowitsch E."/>
            <person name="Rutherford K.M."/>
            <person name="Rutter S."/>
            <person name="Saunders D."/>
            <person name="Seeger K."/>
            <person name="Sharp S."/>
            <person name="Skelton J."/>
            <person name="Simmonds M.N."/>
            <person name="Squares R."/>
            <person name="Squares S."/>
            <person name="Stevens K."/>
            <person name="Taylor K."/>
            <person name="Taylor R.G."/>
            <person name="Tivey A."/>
            <person name="Walsh S.V."/>
            <person name="Warren T."/>
            <person name="Whitehead S."/>
            <person name="Woodward J.R."/>
            <person name="Volckaert G."/>
            <person name="Aert R."/>
            <person name="Robben J."/>
            <person name="Grymonprez B."/>
            <person name="Weltjens I."/>
            <person name="Vanstreels E."/>
            <person name="Rieger M."/>
            <person name="Schaefer M."/>
            <person name="Mueller-Auer S."/>
            <person name="Gabel C."/>
            <person name="Fuchs M."/>
            <person name="Duesterhoeft A."/>
            <person name="Fritzc C."/>
            <person name="Holzer E."/>
            <person name="Moestl D."/>
            <person name="Hilbert H."/>
            <person name="Borzym K."/>
            <person name="Langer I."/>
            <person name="Beck A."/>
            <person name="Lehrach H."/>
            <person name="Reinhardt R."/>
            <person name="Pohl T.M."/>
            <person name="Eger P."/>
            <person name="Zimmermann W."/>
            <person name="Wedler H."/>
            <person name="Wambutt R."/>
            <person name="Purnelle B."/>
            <person name="Goffeau A."/>
            <person name="Cadieu E."/>
            <person name="Dreano S."/>
            <person name="Gloux S."/>
            <person name="Lelaure V."/>
            <person name="Mottier S."/>
            <person name="Galibert F."/>
            <person name="Aves S.J."/>
            <person name="Xiang Z."/>
            <person name="Hunt C."/>
            <person name="Moore K."/>
            <person name="Hurst S.M."/>
            <person name="Lucas M."/>
            <person name="Rochet M."/>
            <person name="Gaillardin C."/>
            <person name="Tallada V.A."/>
            <person name="Garzon A."/>
            <person name="Thode G."/>
            <person name="Daga R.R."/>
            <person name="Cruzado L."/>
            <person name="Jimenez J."/>
            <person name="Sanchez M."/>
            <person name="del Rey F."/>
            <person name="Benito J."/>
            <person name="Dominguez A."/>
            <person name="Revuelta J.L."/>
            <person name="Moreno S."/>
            <person name="Armstrong J."/>
            <person name="Forsburg S.L."/>
            <person name="Cerutti L."/>
            <person name="Lowe T."/>
            <person name="McCombie W.R."/>
            <person name="Paulsen I."/>
            <person name="Potashkin J."/>
            <person name="Shpakovski G.V."/>
            <person name="Ussery D."/>
            <person name="Barrell B.G."/>
            <person name="Nurse P."/>
        </authorList>
    </citation>
    <scope>NUCLEOTIDE SEQUENCE [LARGE SCALE GENOMIC DNA]</scope>
    <source>
        <strain>972 / ATCC 24843</strain>
    </source>
</reference>
<reference key="2">
    <citation type="journal article" date="1999" name="Mol. Biol. Cell">
        <title>A mutant of arp2p causes partial disassembly of the Arp2/3 complex and loss of cortical actin function in fission yeast.</title>
        <authorList>
            <person name="Morrell J.L."/>
            <person name="Morphew M."/>
            <person name="Gould K.L."/>
        </authorList>
    </citation>
    <scope>IDENTIFICATION IN THE ARP2/3 COMPLEX</scope>
</reference>
<feature type="chain" id="PRO_0000124040" description="Actin-related protein 2/3 complex subunit 2">
    <location>
        <begin position="1"/>
        <end position="317"/>
    </location>
</feature>
<feature type="helix" evidence="4">
    <location>
        <begin position="9"/>
        <end position="20"/>
    </location>
</feature>
<feature type="strand" evidence="4">
    <location>
        <begin position="28"/>
        <end position="32"/>
    </location>
</feature>
<feature type="helix" evidence="5">
    <location>
        <begin position="34"/>
        <end position="36"/>
    </location>
</feature>
<feature type="strand" evidence="4">
    <location>
        <begin position="38"/>
        <end position="42"/>
    </location>
</feature>
<feature type="strand" evidence="4">
    <location>
        <begin position="49"/>
        <end position="55"/>
    </location>
</feature>
<feature type="helix" evidence="4">
    <location>
        <begin position="59"/>
        <end position="64"/>
    </location>
</feature>
<feature type="helix" evidence="4">
    <location>
        <begin position="67"/>
        <end position="75"/>
    </location>
</feature>
<feature type="helix" evidence="4">
    <location>
        <begin position="76"/>
        <end position="78"/>
    </location>
</feature>
<feature type="strand" evidence="4">
    <location>
        <begin position="87"/>
        <end position="93"/>
    </location>
</feature>
<feature type="helix" evidence="4">
    <location>
        <begin position="101"/>
        <end position="112"/>
    </location>
</feature>
<feature type="helix" evidence="4">
    <location>
        <begin position="114"/>
        <end position="118"/>
    </location>
</feature>
<feature type="helix" evidence="4">
    <location>
        <begin position="121"/>
        <end position="139"/>
    </location>
</feature>
<feature type="turn" evidence="4">
    <location>
        <begin position="141"/>
        <end position="143"/>
    </location>
</feature>
<feature type="helix" evidence="4">
    <location>
        <begin position="144"/>
        <end position="154"/>
    </location>
</feature>
<feature type="strand" evidence="4">
    <location>
        <begin position="157"/>
        <end position="162"/>
    </location>
</feature>
<feature type="strand" evidence="4">
    <location>
        <begin position="165"/>
        <end position="172"/>
    </location>
</feature>
<feature type="strand" evidence="4">
    <location>
        <begin position="175"/>
        <end position="182"/>
    </location>
</feature>
<feature type="helix" evidence="4">
    <location>
        <begin position="187"/>
        <end position="203"/>
    </location>
</feature>
<feature type="helix" evidence="4">
    <location>
        <begin position="207"/>
        <end position="209"/>
    </location>
</feature>
<feature type="strand" evidence="4">
    <location>
        <begin position="214"/>
        <end position="218"/>
    </location>
</feature>
<feature type="helix" evidence="4">
    <location>
        <begin position="224"/>
        <end position="226"/>
    </location>
</feature>
<feature type="strand" evidence="5">
    <location>
        <begin position="234"/>
        <end position="237"/>
    </location>
</feature>
<feature type="strand" evidence="4">
    <location>
        <begin position="239"/>
        <end position="246"/>
    </location>
</feature>
<feature type="helix" evidence="4">
    <location>
        <begin position="247"/>
        <end position="249"/>
    </location>
</feature>
<feature type="turn" evidence="4">
    <location>
        <begin position="252"/>
        <end position="254"/>
    </location>
</feature>
<feature type="helix" evidence="4">
    <location>
        <begin position="255"/>
        <end position="263"/>
    </location>
</feature>
<feature type="helix" evidence="4">
    <location>
        <begin position="265"/>
        <end position="296"/>
    </location>
</feature>
<keyword id="KW-0002">3D-structure</keyword>
<keyword id="KW-0009">Actin-binding</keyword>
<keyword id="KW-0963">Cytoplasm</keyword>
<keyword id="KW-0206">Cytoskeleton</keyword>
<keyword id="KW-1185">Reference proteome</keyword>